<gene>
    <name evidence="1" type="primary">rpoB</name>
    <name type="ordered locus">ERGA_CDS_01650</name>
</gene>
<accession>Q5FFD9</accession>
<feature type="chain" id="PRO_0000224055" description="DNA-directed RNA polymerase subunit beta">
    <location>
        <begin position="1"/>
        <end position="1380"/>
    </location>
</feature>
<dbReference type="EC" id="2.7.7.6" evidence="1"/>
<dbReference type="EMBL" id="CR925677">
    <property type="protein sequence ID" value="CAI27617.1"/>
    <property type="molecule type" value="Genomic_DNA"/>
</dbReference>
<dbReference type="RefSeq" id="WP_011255344.1">
    <property type="nucleotide sequence ID" value="NC_006831.1"/>
</dbReference>
<dbReference type="SMR" id="Q5FFD9"/>
<dbReference type="KEGG" id="erg:ERGA_CDS_01650"/>
<dbReference type="HOGENOM" id="CLU_000524_4_1_5"/>
<dbReference type="OrthoDB" id="9803954at2"/>
<dbReference type="Proteomes" id="UP000000533">
    <property type="component" value="Chromosome"/>
</dbReference>
<dbReference type="GO" id="GO:0000428">
    <property type="term" value="C:DNA-directed RNA polymerase complex"/>
    <property type="evidence" value="ECO:0007669"/>
    <property type="project" value="UniProtKB-KW"/>
</dbReference>
<dbReference type="GO" id="GO:0003677">
    <property type="term" value="F:DNA binding"/>
    <property type="evidence" value="ECO:0007669"/>
    <property type="project" value="UniProtKB-UniRule"/>
</dbReference>
<dbReference type="GO" id="GO:0003899">
    <property type="term" value="F:DNA-directed RNA polymerase activity"/>
    <property type="evidence" value="ECO:0007669"/>
    <property type="project" value="UniProtKB-UniRule"/>
</dbReference>
<dbReference type="GO" id="GO:0032549">
    <property type="term" value="F:ribonucleoside binding"/>
    <property type="evidence" value="ECO:0007669"/>
    <property type="project" value="InterPro"/>
</dbReference>
<dbReference type="GO" id="GO:0006351">
    <property type="term" value="P:DNA-templated transcription"/>
    <property type="evidence" value="ECO:0007669"/>
    <property type="project" value="UniProtKB-UniRule"/>
</dbReference>
<dbReference type="CDD" id="cd00653">
    <property type="entry name" value="RNA_pol_B_RPB2"/>
    <property type="match status" value="1"/>
</dbReference>
<dbReference type="Gene3D" id="2.40.50.100">
    <property type="match status" value="1"/>
</dbReference>
<dbReference type="Gene3D" id="2.40.50.150">
    <property type="match status" value="1"/>
</dbReference>
<dbReference type="Gene3D" id="3.90.1100.10">
    <property type="match status" value="2"/>
</dbReference>
<dbReference type="Gene3D" id="2.30.150.10">
    <property type="entry name" value="DNA-directed RNA polymerase, beta subunit, external 1 domain"/>
    <property type="match status" value="1"/>
</dbReference>
<dbReference type="Gene3D" id="2.40.270.10">
    <property type="entry name" value="DNA-directed RNA polymerase, subunit 2, domain 6"/>
    <property type="match status" value="1"/>
</dbReference>
<dbReference type="Gene3D" id="3.90.1800.10">
    <property type="entry name" value="RNA polymerase alpha subunit dimerisation domain"/>
    <property type="match status" value="1"/>
</dbReference>
<dbReference type="HAMAP" id="MF_01321">
    <property type="entry name" value="RNApol_bact_RpoB"/>
    <property type="match status" value="1"/>
</dbReference>
<dbReference type="InterPro" id="IPR042107">
    <property type="entry name" value="DNA-dir_RNA_pol_bsu_ext_1_sf"/>
</dbReference>
<dbReference type="InterPro" id="IPR019462">
    <property type="entry name" value="DNA-dir_RNA_pol_bsu_external_1"/>
</dbReference>
<dbReference type="InterPro" id="IPR015712">
    <property type="entry name" value="DNA-dir_RNA_pol_su2"/>
</dbReference>
<dbReference type="InterPro" id="IPR007120">
    <property type="entry name" value="DNA-dir_RNAP_su2_dom"/>
</dbReference>
<dbReference type="InterPro" id="IPR037033">
    <property type="entry name" value="DNA-dir_RNAP_su2_hyb_sf"/>
</dbReference>
<dbReference type="InterPro" id="IPR010243">
    <property type="entry name" value="RNA_pol_bsu_bac"/>
</dbReference>
<dbReference type="InterPro" id="IPR007121">
    <property type="entry name" value="RNA_pol_bsu_CS"/>
</dbReference>
<dbReference type="InterPro" id="IPR007644">
    <property type="entry name" value="RNA_pol_bsu_protrusion"/>
</dbReference>
<dbReference type="InterPro" id="IPR007642">
    <property type="entry name" value="RNA_pol_Rpb2_2"/>
</dbReference>
<dbReference type="InterPro" id="IPR007645">
    <property type="entry name" value="RNA_pol_Rpb2_3"/>
</dbReference>
<dbReference type="InterPro" id="IPR007641">
    <property type="entry name" value="RNA_pol_Rpb2_7"/>
</dbReference>
<dbReference type="InterPro" id="IPR014724">
    <property type="entry name" value="RNA_pol_RPB2_OB-fold"/>
</dbReference>
<dbReference type="NCBIfam" id="NF001616">
    <property type="entry name" value="PRK00405.1"/>
    <property type="match status" value="1"/>
</dbReference>
<dbReference type="NCBIfam" id="TIGR02013">
    <property type="entry name" value="rpoB"/>
    <property type="match status" value="1"/>
</dbReference>
<dbReference type="PANTHER" id="PTHR20856">
    <property type="entry name" value="DNA-DIRECTED RNA POLYMERASE I SUBUNIT 2"/>
    <property type="match status" value="1"/>
</dbReference>
<dbReference type="Pfam" id="PF04563">
    <property type="entry name" value="RNA_pol_Rpb2_1"/>
    <property type="match status" value="1"/>
</dbReference>
<dbReference type="Pfam" id="PF04561">
    <property type="entry name" value="RNA_pol_Rpb2_2"/>
    <property type="match status" value="2"/>
</dbReference>
<dbReference type="Pfam" id="PF04565">
    <property type="entry name" value="RNA_pol_Rpb2_3"/>
    <property type="match status" value="1"/>
</dbReference>
<dbReference type="Pfam" id="PF10385">
    <property type="entry name" value="RNA_pol_Rpb2_45"/>
    <property type="match status" value="1"/>
</dbReference>
<dbReference type="Pfam" id="PF00562">
    <property type="entry name" value="RNA_pol_Rpb2_6"/>
    <property type="match status" value="1"/>
</dbReference>
<dbReference type="Pfam" id="PF04560">
    <property type="entry name" value="RNA_pol_Rpb2_7"/>
    <property type="match status" value="1"/>
</dbReference>
<dbReference type="SUPFAM" id="SSF64484">
    <property type="entry name" value="beta and beta-prime subunits of DNA dependent RNA-polymerase"/>
    <property type="match status" value="1"/>
</dbReference>
<dbReference type="PROSITE" id="PS01166">
    <property type="entry name" value="RNA_POL_BETA"/>
    <property type="match status" value="1"/>
</dbReference>
<protein>
    <recommendedName>
        <fullName evidence="1">DNA-directed RNA polymerase subunit beta</fullName>
        <shortName evidence="1">RNAP subunit beta</shortName>
        <ecNumber evidence="1">2.7.7.6</ecNumber>
    </recommendedName>
    <alternativeName>
        <fullName evidence="1">RNA polymerase subunit beta</fullName>
    </alternativeName>
    <alternativeName>
        <fullName evidence="1">Transcriptase subunit beta</fullName>
    </alternativeName>
</protein>
<reference key="1">
    <citation type="journal article" date="2006" name="J. Bacteriol.">
        <title>Comparative genomic analysis of three strains of Ehrlichia ruminantium reveals an active process of genome size plasticity.</title>
        <authorList>
            <person name="Frutos R."/>
            <person name="Viari A."/>
            <person name="Ferraz C."/>
            <person name="Morgat A."/>
            <person name="Eychenie S."/>
            <person name="Kandassamy Y."/>
            <person name="Chantal I."/>
            <person name="Bensaid A."/>
            <person name="Coissac E."/>
            <person name="Vachiery N."/>
            <person name="Demaille J."/>
            <person name="Martinez D."/>
        </authorList>
    </citation>
    <scope>NUCLEOTIDE SEQUENCE [LARGE SCALE GENOMIC DNA]</scope>
    <source>
        <strain>Gardel</strain>
    </source>
</reference>
<keyword id="KW-0240">DNA-directed RNA polymerase</keyword>
<keyword id="KW-0548">Nucleotidyltransferase</keyword>
<keyword id="KW-0804">Transcription</keyword>
<keyword id="KW-0808">Transferase</keyword>
<name>RPOB_EHRRG</name>
<proteinExistence type="inferred from homology"/>
<evidence type="ECO:0000255" key="1">
    <source>
        <dbReference type="HAMAP-Rule" id="MF_01321"/>
    </source>
</evidence>
<organism>
    <name type="scientific">Ehrlichia ruminantium (strain Gardel)</name>
    <dbReference type="NCBI Taxonomy" id="302409"/>
    <lineage>
        <taxon>Bacteria</taxon>
        <taxon>Pseudomonadati</taxon>
        <taxon>Pseudomonadota</taxon>
        <taxon>Alphaproteobacteria</taxon>
        <taxon>Rickettsiales</taxon>
        <taxon>Anaplasmataceae</taxon>
        <taxon>Ehrlichia</taxon>
    </lineage>
</organism>
<sequence>MSSSVTSKYVLNSFSSVPRLSYAKSIDIKDSLTDLIKIQRDSYNAFIGIDQDVDSGIKNIFQSMFPIQDLLGRAVLQFVSYSIGEPQYDEYECIKRGITYSVPIRIVLRFIVWKVQEVSFKEVKYVVDEETSEKSIKYIKEQEVSIGDLPTMTSYGTFIINGVERVIVSQMHRSPGVFFDSDKGKTYSSGKLIYLARIIPYRGSWLDFEFDIKDILYFRIDRKRKLPVSLLLRALGLSNSEILDTFYDKIRYERCENGWVVPFVVDRFRGVRLSYDLVDIDGNVLVKANTRITLRLAKKLASDGLKKYLVPFAEIQGLFIANDLVDPASNVMIMCAGESITSEHINKLKLFDINEIFILNIDFLTVGPYILNTLFLDKNISYEDALFEIYKVLRSGESPSLDTMKAFFDGLFFEKERYDLSTVGRIKLNDHLGLDISEDVTVLTKDDIIHVIKKLVLLRDGEGFVDDIDHLGNRRVRSVGEFIENQFRIGILRLERMIMDYMSSVNFDNAMPCDFVNPKVLATVLKDFFSSSQLSQFMDQTNPLSEVTHKRRLSALGPGGLTRERAGFEVRDVHPTHYGRICPIETPEGQNIGLISSLAIYARINKHGFIESPYRKVDNGIVTDKVEYLLAMQESNYYIADASATLDENNRFVDDMLYCRHDGNFVMVKREQVDYIDVSPKQIVSVAASLIPFLENNDANRALMGSNMQRQAVPLLKADAPLVGTGMESIVAAGSGTVVLAKRSGIVHRVDGLYIVIRAFDKEKNEYLGVDIYNLRKFQRSNHNTCINQKPLVKPGDYVRENDVIADGSAIDQGELALGKNVLVAFMSWQGYNFEDSIVISSEVVKKDVFTSIHIEEFECVVRDTALGPEKIMRSIPDVNEDSLSHLDDVGIVNVGAEVSAGDILVGKVTPRPPVSLPPETKLLVTIFGEKVFDCVDSSLYLPIDVEGTVVDVHVFVRRGVEENDRSLLIKQNEINGFIKERDYEIDVVSEYFYDELKRVLVNTNTEYNNQNIEDYLKSIPQKSWWDIKLSDESVLSQISDLKEKFDSMIENAHSKFDQKIDKLNYGYDLPQGVLCIVKVFVAVKHNLQPGDKMAGRHGNKGVISRIVPVEDMPYLEDGTPVDIILNSLGVPSRMNVGQILETHLGWASVNLGKKIGNILDNIDELTIAHLRNFLDQVYDGQDLKYSIRSMSDDDLLAFAERLRDGVPMAAPVFEGPKDNQISNLLKLADLDVSGQVDLYDGRIGEKFDRKVTVGYIYMLKLHHLVDDKIHARSVGPYGLVTQQPLGGKSHFGGQRFGEMECWALQAYGAAYTLQEMLTVKSDDIVGRVKIYESIIKGDSNFECGIPESFNVMVKELRSLCLDVALKQDKDFLHDRKINN</sequence>
<comment type="function">
    <text evidence="1">DNA-dependent RNA polymerase catalyzes the transcription of DNA into RNA using the four ribonucleoside triphosphates as substrates.</text>
</comment>
<comment type="catalytic activity">
    <reaction evidence="1">
        <text>RNA(n) + a ribonucleoside 5'-triphosphate = RNA(n+1) + diphosphate</text>
        <dbReference type="Rhea" id="RHEA:21248"/>
        <dbReference type="Rhea" id="RHEA-COMP:14527"/>
        <dbReference type="Rhea" id="RHEA-COMP:17342"/>
        <dbReference type="ChEBI" id="CHEBI:33019"/>
        <dbReference type="ChEBI" id="CHEBI:61557"/>
        <dbReference type="ChEBI" id="CHEBI:140395"/>
        <dbReference type="EC" id="2.7.7.6"/>
    </reaction>
</comment>
<comment type="subunit">
    <text evidence="1">The RNAP catalytic core consists of 2 alpha, 1 beta, 1 beta' and 1 omega subunit. When a sigma factor is associated with the core the holoenzyme is formed, which can initiate transcription.</text>
</comment>
<comment type="similarity">
    <text evidence="1">Belongs to the RNA polymerase beta chain family.</text>
</comment>